<reference key="1">
    <citation type="journal article" date="2005" name="Science">
        <title>The transcriptional landscape of the mammalian genome.</title>
        <authorList>
            <person name="Carninci P."/>
            <person name="Kasukawa T."/>
            <person name="Katayama S."/>
            <person name="Gough J."/>
            <person name="Frith M.C."/>
            <person name="Maeda N."/>
            <person name="Oyama R."/>
            <person name="Ravasi T."/>
            <person name="Lenhard B."/>
            <person name="Wells C."/>
            <person name="Kodzius R."/>
            <person name="Shimokawa K."/>
            <person name="Bajic V.B."/>
            <person name="Brenner S.E."/>
            <person name="Batalov S."/>
            <person name="Forrest A.R."/>
            <person name="Zavolan M."/>
            <person name="Davis M.J."/>
            <person name="Wilming L.G."/>
            <person name="Aidinis V."/>
            <person name="Allen J.E."/>
            <person name="Ambesi-Impiombato A."/>
            <person name="Apweiler R."/>
            <person name="Aturaliya R.N."/>
            <person name="Bailey T.L."/>
            <person name="Bansal M."/>
            <person name="Baxter L."/>
            <person name="Beisel K.W."/>
            <person name="Bersano T."/>
            <person name="Bono H."/>
            <person name="Chalk A.M."/>
            <person name="Chiu K.P."/>
            <person name="Choudhary V."/>
            <person name="Christoffels A."/>
            <person name="Clutterbuck D.R."/>
            <person name="Crowe M.L."/>
            <person name="Dalla E."/>
            <person name="Dalrymple B.P."/>
            <person name="de Bono B."/>
            <person name="Della Gatta G."/>
            <person name="di Bernardo D."/>
            <person name="Down T."/>
            <person name="Engstrom P."/>
            <person name="Fagiolini M."/>
            <person name="Faulkner G."/>
            <person name="Fletcher C.F."/>
            <person name="Fukushima T."/>
            <person name="Furuno M."/>
            <person name="Futaki S."/>
            <person name="Gariboldi M."/>
            <person name="Georgii-Hemming P."/>
            <person name="Gingeras T.R."/>
            <person name="Gojobori T."/>
            <person name="Green R.E."/>
            <person name="Gustincich S."/>
            <person name="Harbers M."/>
            <person name="Hayashi Y."/>
            <person name="Hensch T.K."/>
            <person name="Hirokawa N."/>
            <person name="Hill D."/>
            <person name="Huminiecki L."/>
            <person name="Iacono M."/>
            <person name="Ikeo K."/>
            <person name="Iwama A."/>
            <person name="Ishikawa T."/>
            <person name="Jakt M."/>
            <person name="Kanapin A."/>
            <person name="Katoh M."/>
            <person name="Kawasawa Y."/>
            <person name="Kelso J."/>
            <person name="Kitamura H."/>
            <person name="Kitano H."/>
            <person name="Kollias G."/>
            <person name="Krishnan S.P."/>
            <person name="Kruger A."/>
            <person name="Kummerfeld S.K."/>
            <person name="Kurochkin I.V."/>
            <person name="Lareau L.F."/>
            <person name="Lazarevic D."/>
            <person name="Lipovich L."/>
            <person name="Liu J."/>
            <person name="Liuni S."/>
            <person name="McWilliam S."/>
            <person name="Madan Babu M."/>
            <person name="Madera M."/>
            <person name="Marchionni L."/>
            <person name="Matsuda H."/>
            <person name="Matsuzawa S."/>
            <person name="Miki H."/>
            <person name="Mignone F."/>
            <person name="Miyake S."/>
            <person name="Morris K."/>
            <person name="Mottagui-Tabar S."/>
            <person name="Mulder N."/>
            <person name="Nakano N."/>
            <person name="Nakauchi H."/>
            <person name="Ng P."/>
            <person name="Nilsson R."/>
            <person name="Nishiguchi S."/>
            <person name="Nishikawa S."/>
            <person name="Nori F."/>
            <person name="Ohara O."/>
            <person name="Okazaki Y."/>
            <person name="Orlando V."/>
            <person name="Pang K.C."/>
            <person name="Pavan W.J."/>
            <person name="Pavesi G."/>
            <person name="Pesole G."/>
            <person name="Petrovsky N."/>
            <person name="Piazza S."/>
            <person name="Reed J."/>
            <person name="Reid J.F."/>
            <person name="Ring B.Z."/>
            <person name="Ringwald M."/>
            <person name="Rost B."/>
            <person name="Ruan Y."/>
            <person name="Salzberg S.L."/>
            <person name="Sandelin A."/>
            <person name="Schneider C."/>
            <person name="Schoenbach C."/>
            <person name="Sekiguchi K."/>
            <person name="Semple C.A."/>
            <person name="Seno S."/>
            <person name="Sessa L."/>
            <person name="Sheng Y."/>
            <person name="Shibata Y."/>
            <person name="Shimada H."/>
            <person name="Shimada K."/>
            <person name="Silva D."/>
            <person name="Sinclair B."/>
            <person name="Sperling S."/>
            <person name="Stupka E."/>
            <person name="Sugiura K."/>
            <person name="Sultana R."/>
            <person name="Takenaka Y."/>
            <person name="Taki K."/>
            <person name="Tammoja K."/>
            <person name="Tan S.L."/>
            <person name="Tang S."/>
            <person name="Taylor M.S."/>
            <person name="Tegner J."/>
            <person name="Teichmann S.A."/>
            <person name="Ueda H.R."/>
            <person name="van Nimwegen E."/>
            <person name="Verardo R."/>
            <person name="Wei C.L."/>
            <person name="Yagi K."/>
            <person name="Yamanishi H."/>
            <person name="Zabarovsky E."/>
            <person name="Zhu S."/>
            <person name="Zimmer A."/>
            <person name="Hide W."/>
            <person name="Bult C."/>
            <person name="Grimmond S.M."/>
            <person name="Teasdale R.D."/>
            <person name="Liu E.T."/>
            <person name="Brusic V."/>
            <person name="Quackenbush J."/>
            <person name="Wahlestedt C."/>
            <person name="Mattick J.S."/>
            <person name="Hume D.A."/>
            <person name="Kai C."/>
            <person name="Sasaki D."/>
            <person name="Tomaru Y."/>
            <person name="Fukuda S."/>
            <person name="Kanamori-Katayama M."/>
            <person name="Suzuki M."/>
            <person name="Aoki J."/>
            <person name="Arakawa T."/>
            <person name="Iida J."/>
            <person name="Imamura K."/>
            <person name="Itoh M."/>
            <person name="Kato T."/>
            <person name="Kawaji H."/>
            <person name="Kawagashira N."/>
            <person name="Kawashima T."/>
            <person name="Kojima M."/>
            <person name="Kondo S."/>
            <person name="Konno H."/>
            <person name="Nakano K."/>
            <person name="Ninomiya N."/>
            <person name="Nishio T."/>
            <person name="Okada M."/>
            <person name="Plessy C."/>
            <person name="Shibata K."/>
            <person name="Shiraki T."/>
            <person name="Suzuki S."/>
            <person name="Tagami M."/>
            <person name="Waki K."/>
            <person name="Watahiki A."/>
            <person name="Okamura-Oho Y."/>
            <person name="Suzuki H."/>
            <person name="Kawai J."/>
            <person name="Hayashizaki Y."/>
        </authorList>
    </citation>
    <scope>NUCLEOTIDE SEQUENCE [LARGE SCALE MRNA]</scope>
    <source>
        <strain>NOD</strain>
        <tissue>Thymus</tissue>
    </source>
</reference>
<reference key="2">
    <citation type="journal article" date="2009" name="PLoS Biol.">
        <title>Lineage-specific biology revealed by a finished genome assembly of the mouse.</title>
        <authorList>
            <person name="Church D.M."/>
            <person name="Goodstadt L."/>
            <person name="Hillier L.W."/>
            <person name="Zody M.C."/>
            <person name="Goldstein S."/>
            <person name="She X."/>
            <person name="Bult C.J."/>
            <person name="Agarwala R."/>
            <person name="Cherry J.L."/>
            <person name="DiCuccio M."/>
            <person name="Hlavina W."/>
            <person name="Kapustin Y."/>
            <person name="Meric P."/>
            <person name="Maglott D."/>
            <person name="Birtle Z."/>
            <person name="Marques A.C."/>
            <person name="Graves T."/>
            <person name="Zhou S."/>
            <person name="Teague B."/>
            <person name="Potamousis K."/>
            <person name="Churas C."/>
            <person name="Place M."/>
            <person name="Herschleb J."/>
            <person name="Runnheim R."/>
            <person name="Forrest D."/>
            <person name="Amos-Landgraf J."/>
            <person name="Schwartz D.C."/>
            <person name="Cheng Z."/>
            <person name="Lindblad-Toh K."/>
            <person name="Eichler E.E."/>
            <person name="Ponting C.P."/>
        </authorList>
    </citation>
    <scope>NUCLEOTIDE SEQUENCE [LARGE SCALE GENOMIC DNA]</scope>
    <source>
        <strain>C57BL/6J</strain>
    </source>
</reference>
<reference key="3">
    <citation type="journal article" date="2004" name="Genome Res.">
        <title>The status, quality, and expansion of the NIH full-length cDNA project: the Mammalian Gene Collection (MGC).</title>
        <authorList>
            <consortium name="The MGC Project Team"/>
        </authorList>
    </citation>
    <scope>NUCLEOTIDE SEQUENCE [LARGE SCALE MRNA]</scope>
    <source>
        <strain>FVB/N</strain>
        <tissue>Mammary tumor</tissue>
    </source>
</reference>
<reference key="4">
    <citation type="journal article" date="2007" name="Proc. Natl. Acad. Sci. U.S.A.">
        <title>Large-scale phosphorylation analysis of mouse liver.</title>
        <authorList>
            <person name="Villen J."/>
            <person name="Beausoleil S.A."/>
            <person name="Gerber S.A."/>
            <person name="Gygi S.P."/>
        </authorList>
    </citation>
    <scope>IDENTIFICATION BY MASS SPECTROMETRY [LARGE SCALE ANALYSIS]</scope>
    <source>
        <tissue>Liver</tissue>
    </source>
</reference>
<reference key="5">
    <citation type="journal article" date="2009" name="Immunity">
        <title>The phagosomal proteome in interferon-gamma-activated macrophages.</title>
        <authorList>
            <person name="Trost M."/>
            <person name="English L."/>
            <person name="Lemieux S."/>
            <person name="Courcelles M."/>
            <person name="Desjardins M."/>
            <person name="Thibault P."/>
        </authorList>
    </citation>
    <scope>IDENTIFICATION BY MASS SPECTROMETRY [LARGE SCALE ANALYSIS]</scope>
</reference>
<reference key="6">
    <citation type="journal article" date="2010" name="Cell">
        <title>A tissue-specific atlas of mouse protein phosphorylation and expression.</title>
        <authorList>
            <person name="Huttlin E.L."/>
            <person name="Jedrychowski M.P."/>
            <person name="Elias J.E."/>
            <person name="Goswami T."/>
            <person name="Rad R."/>
            <person name="Beausoleil S.A."/>
            <person name="Villen J."/>
            <person name="Haas W."/>
            <person name="Sowa M.E."/>
            <person name="Gygi S.P."/>
        </authorList>
    </citation>
    <scope>PHOSPHORYLATION [LARGE SCALE ANALYSIS] AT SER-429 AND SER-498</scope>
    <scope>IDENTIFICATION BY MASS SPECTROMETRY [LARGE SCALE ANALYSIS]</scope>
    <source>
        <tissue>Kidney</tissue>
        <tissue>Liver</tissue>
        <tissue>Lung</tissue>
        <tissue>Spleen</tissue>
        <tissue>Testis</tissue>
    </source>
</reference>
<reference key="7">
    <citation type="journal article" date="2015" name="J. Neurosci.">
        <title>Loss of Clcc1 results in ER stress, misfolded protein accumulation, and neurodegeneration.</title>
        <authorList>
            <person name="Jia Y."/>
            <person name="Jucius T.J."/>
            <person name="Cook S.A."/>
            <person name="Ackerman S.L."/>
        </authorList>
    </citation>
    <scope>FUNCTION</scope>
    <scope>DISEASE</scope>
</reference>
<reference key="8">
    <citation type="journal article" date="2018" name="PLoS Genet.">
        <title>Mutation in the intracellular chloride channel CLCC1 associated with autosomal recessive retinitis pigmentosa.</title>
        <authorList>
            <person name="Li L."/>
            <person name="Jiao X."/>
            <person name="D'Atri I."/>
            <person name="Ono F."/>
            <person name="Nelson R."/>
            <person name="Chan C.C."/>
            <person name="Nakaya N."/>
            <person name="Ma Z."/>
            <person name="Ma Y."/>
            <person name="Cai X."/>
            <person name="Zhang L."/>
            <person name="Lin S."/>
            <person name="Hameed A."/>
            <person name="Chioza B.A."/>
            <person name="Hardy H."/>
            <person name="Arno G."/>
            <person name="Hull S."/>
            <person name="Khan M.I."/>
            <person name="Fasham J."/>
            <person name="Harlalka G.V."/>
            <person name="Michaelides M."/>
            <person name="Moore A.T."/>
            <person name="Coban Akdemir Z.H."/>
            <person name="Jhangiani S."/>
            <person name="Lupski J.R."/>
            <person name="Cremers F.P.M."/>
            <person name="Qamar R."/>
            <person name="Salman A."/>
            <person name="Chilton J."/>
            <person name="Self J."/>
            <person name="Ayyagari R."/>
            <person name="Kabir F."/>
            <person name="Naeem M.A."/>
            <person name="Ali M."/>
            <person name="Akram J."/>
            <person name="Sieving P.A."/>
            <person name="Riazuddin S."/>
            <person name="Baple E.L."/>
            <person name="Riazuddin S.A."/>
            <person name="Crosby A.H."/>
            <person name="Hejtmancik J.F."/>
        </authorList>
    </citation>
    <scope>FUNCTION</scope>
    <scope>DISRUPTION PHENOTYPE</scope>
</reference>
<reference key="9">
    <citation type="journal article" date="2023" name="Cell Res.">
        <title>Disruption of ER ion homeostasis maintained by an ER anion channel CLCC1 contributes to ALS-like pathologies.</title>
        <authorList>
            <person name="Guo L."/>
            <person name="Mao Q."/>
            <person name="He J."/>
            <person name="Liu X."/>
            <person name="Piao X."/>
            <person name="Luo L."/>
            <person name="Hao X."/>
            <person name="Yu H."/>
            <person name="Song Q."/>
            <person name="Xiao B."/>
            <person name="Fan D."/>
            <person name="Gao Z."/>
            <person name="Jia Y."/>
        </authorList>
    </citation>
    <scope>FUNCTION</scope>
    <scope>TRANSPORTER ACTIVITY</scope>
    <scope>ACTIVITY REGULATION</scope>
    <scope>SUBUNIT</scope>
    <scope>SUBCELLULAR LOCATION</scope>
    <scope>TOPOLOGY</scope>
    <scope>TISSUE SPECIFICITY</scope>
    <scope>MUTAGENESIS OF LYS-298</scope>
</reference>
<protein>
    <recommendedName>
        <fullName>Chloride channel CLIC-like protein 1</fullName>
    </recommendedName>
    <alternativeName>
        <fullName evidence="8">ER anion channel 1</fullName>
        <shortName evidence="8">ERAC1</shortName>
    </alternativeName>
</protein>
<sequence>MLCRLLLCECLLLITGYAHDDDWIDPTDMLNYDAASGTMRKSQVRSGTSEKKEVSPDSSEAEELSDCLHRLDSLTHKVDSCEKKKMKDYESQSNPVFRRYLNKILIEAGKLGLPDENKVEMRYDAEILLSRQTLLEIQKFLSGEEWKPGALDDALSDILINFKCHDSEAWKWQFEDYFGVDPYNVFMVLLCLLCLVVLVATELWTYVRWYTQMKRIFIISFLLSLAWNWIYLYKMAFAQHQANIAGMEPFDNLCAKKMDWTGSLWEWFTSSWTYKDDPCQKYYELLIVNPIWLVPPTKALAITFTNFVTEPLKHIGKGAGEFIKALMKEIPVLLQIPVLAILALAVLSFCYGAGRSVPMLRHFGGPDREPPRALEPDDRRRQKGLDYRLHGGAGDADFSYRGPAGSIEQGPYDKMHASKRDALRQRFHSGNKSPEVLRAFDLPDTEAQEHPEVVPSHKSPIMNTNLETGELPGESTPTEYSQSAKDVSGQVPSAGKSSPTVDKAQLKTDSECSPPGGCPPSKEAAVAAHGTEPVSSPCG</sequence>
<name>CLCC1_MOUSE</name>
<gene>
    <name evidence="7 11" type="primary">Clcc1</name>
</gene>
<evidence type="ECO:0000250" key="1">
    <source>
        <dbReference type="UniProtKB" id="Q96S66"/>
    </source>
</evidence>
<evidence type="ECO:0000255" key="2"/>
<evidence type="ECO:0000256" key="3">
    <source>
        <dbReference type="SAM" id="MobiDB-lite"/>
    </source>
</evidence>
<evidence type="ECO:0000269" key="4">
    <source>
    </source>
</evidence>
<evidence type="ECO:0000269" key="5">
    <source>
    </source>
</evidence>
<evidence type="ECO:0000269" key="6">
    <source>
    </source>
</evidence>
<evidence type="ECO:0000303" key="7">
    <source>
    </source>
</evidence>
<evidence type="ECO:0000303" key="8">
    <source>
    </source>
</evidence>
<evidence type="ECO:0000305" key="9"/>
<evidence type="ECO:0000305" key="10">
    <source>
    </source>
</evidence>
<evidence type="ECO:0000312" key="11">
    <source>
        <dbReference type="MGI" id="MGI:2385186"/>
    </source>
</evidence>
<evidence type="ECO:0007744" key="12">
    <source>
    </source>
</evidence>
<accession>Q99LI2</accession>
<accession>A2AEK9</accession>
<dbReference type="EMBL" id="AK169803">
    <property type="protein sequence ID" value="BAE41377.1"/>
    <property type="molecule type" value="mRNA"/>
</dbReference>
<dbReference type="EMBL" id="AK171296">
    <property type="protein sequence ID" value="BAE42376.1"/>
    <property type="molecule type" value="mRNA"/>
</dbReference>
<dbReference type="EMBL" id="AL671917">
    <property type="protein sequence ID" value="CAM17753.1"/>
    <property type="status" value="ALT_SEQ"/>
    <property type="molecule type" value="Genomic_DNA"/>
</dbReference>
<dbReference type="EMBL" id="AL671917">
    <property type="protein sequence ID" value="CAM17754.1"/>
    <property type="molecule type" value="Genomic_DNA"/>
</dbReference>
<dbReference type="EMBL" id="BC003247">
    <property type="protein sequence ID" value="AAH03247.1"/>
    <property type="molecule type" value="mRNA"/>
</dbReference>
<dbReference type="CCDS" id="CCDS17766.1"/>
<dbReference type="RefSeq" id="NP_001171242.1">
    <property type="nucleotide sequence ID" value="NM_001177771.2"/>
</dbReference>
<dbReference type="RefSeq" id="NP_001342561.1">
    <property type="nucleotide sequence ID" value="NM_001355632.1"/>
</dbReference>
<dbReference type="RefSeq" id="NP_663518.1">
    <property type="nucleotide sequence ID" value="NM_145543.2"/>
</dbReference>
<dbReference type="RefSeq" id="XP_006501479.1">
    <property type="nucleotide sequence ID" value="XM_006501416.3"/>
</dbReference>
<dbReference type="RefSeq" id="XP_017175050.1">
    <property type="nucleotide sequence ID" value="XM_017319561.1"/>
</dbReference>
<dbReference type="RefSeq" id="XP_030108456.1">
    <property type="nucleotide sequence ID" value="XM_030252596.2"/>
</dbReference>
<dbReference type="BioGRID" id="230895">
    <property type="interactions" value="3"/>
</dbReference>
<dbReference type="FunCoup" id="Q99LI2">
    <property type="interactions" value="4481"/>
</dbReference>
<dbReference type="IntAct" id="Q99LI2">
    <property type="interactions" value="3"/>
</dbReference>
<dbReference type="MINT" id="Q99LI2"/>
<dbReference type="STRING" id="10090.ENSMUSP00000102224"/>
<dbReference type="iPTMnet" id="Q99LI2"/>
<dbReference type="PhosphoSitePlus" id="Q99LI2"/>
<dbReference type="SwissPalm" id="Q99LI2"/>
<dbReference type="jPOST" id="Q99LI2"/>
<dbReference type="PaxDb" id="10090-ENSMUSP00000102224"/>
<dbReference type="PeptideAtlas" id="Q99LI2"/>
<dbReference type="ProteomicsDB" id="283375"/>
<dbReference type="Pumba" id="Q99LI2"/>
<dbReference type="Antibodypedia" id="2391">
    <property type="antibodies" value="150 antibodies from 29 providers"/>
</dbReference>
<dbReference type="DNASU" id="229725"/>
<dbReference type="Ensembl" id="ENSMUST00000029483.15">
    <property type="protein sequence ID" value="ENSMUSP00000029483.9"/>
    <property type="gene ID" value="ENSMUSG00000027884.17"/>
</dbReference>
<dbReference type="Ensembl" id="ENSMUST00000106609.8">
    <property type="protein sequence ID" value="ENSMUSP00000102220.2"/>
    <property type="gene ID" value="ENSMUSG00000027884.17"/>
</dbReference>
<dbReference type="GeneID" id="229725"/>
<dbReference type="KEGG" id="mmu:229725"/>
<dbReference type="UCSC" id="uc008qzk.2">
    <property type="organism name" value="mouse"/>
</dbReference>
<dbReference type="AGR" id="MGI:2385186"/>
<dbReference type="CTD" id="23155"/>
<dbReference type="MGI" id="MGI:2385186">
    <property type="gene designation" value="Clcc1"/>
</dbReference>
<dbReference type="VEuPathDB" id="HostDB:ENSMUSG00000027884"/>
<dbReference type="eggNOG" id="ENOG502QSP7">
    <property type="taxonomic scope" value="Eukaryota"/>
</dbReference>
<dbReference type="GeneTree" id="ENSGT00390000016611"/>
<dbReference type="HOGENOM" id="CLU_034552_1_1_1"/>
<dbReference type="InParanoid" id="Q99LI2"/>
<dbReference type="OMA" id="VQDDEWI"/>
<dbReference type="OrthoDB" id="10037397at2759"/>
<dbReference type="BioGRID-ORCS" id="229725">
    <property type="hits" value="8 hits in 76 CRISPR screens"/>
</dbReference>
<dbReference type="ChiTaRS" id="Clcc1">
    <property type="organism name" value="mouse"/>
</dbReference>
<dbReference type="PRO" id="PR:Q99LI2"/>
<dbReference type="Proteomes" id="UP000000589">
    <property type="component" value="Chromosome 3"/>
</dbReference>
<dbReference type="RNAct" id="Q99LI2">
    <property type="molecule type" value="protein"/>
</dbReference>
<dbReference type="Bgee" id="ENSMUSG00000027884">
    <property type="expression patterns" value="Expressed in spermatocyte and 240 other cell types or tissues"/>
</dbReference>
<dbReference type="ExpressionAtlas" id="Q99LI2">
    <property type="expression patterns" value="baseline and differential"/>
</dbReference>
<dbReference type="GO" id="GO:0034707">
    <property type="term" value="C:chloride channel complex"/>
    <property type="evidence" value="ECO:0007669"/>
    <property type="project" value="UniProtKB-KW"/>
</dbReference>
<dbReference type="GO" id="GO:0005789">
    <property type="term" value="C:endoplasmic reticulum membrane"/>
    <property type="evidence" value="ECO:0000314"/>
    <property type="project" value="UniProtKB"/>
</dbReference>
<dbReference type="GO" id="GO:0044233">
    <property type="term" value="C:mitochondria-associated endoplasmic reticulum membrane contact site"/>
    <property type="evidence" value="ECO:0000250"/>
    <property type="project" value="UniProtKB"/>
</dbReference>
<dbReference type="GO" id="GO:0005254">
    <property type="term" value="F:chloride channel activity"/>
    <property type="evidence" value="ECO:0000314"/>
    <property type="project" value="UniProtKB"/>
</dbReference>
<dbReference type="GO" id="GO:0042802">
    <property type="term" value="F:identical protein binding"/>
    <property type="evidence" value="ECO:0000314"/>
    <property type="project" value="UniProtKB"/>
</dbReference>
<dbReference type="GO" id="GO:0032469">
    <property type="term" value="P:endoplasmic reticulum calcium ion homeostasis"/>
    <property type="evidence" value="ECO:0000315"/>
    <property type="project" value="UniProtKB"/>
</dbReference>
<dbReference type="InterPro" id="IPR009231">
    <property type="entry name" value="Chloride_chnl_CLIC-like"/>
</dbReference>
<dbReference type="PANTHER" id="PTHR34093">
    <property type="entry name" value="CHLORIDE CHANNEL CLIC-LIKE PROTEIN 1"/>
    <property type="match status" value="1"/>
</dbReference>
<dbReference type="PANTHER" id="PTHR34093:SF1">
    <property type="entry name" value="CHLORIDE CHANNEL CLIC-LIKE PROTEIN 1"/>
    <property type="match status" value="1"/>
</dbReference>
<dbReference type="Pfam" id="PF05934">
    <property type="entry name" value="MCLC"/>
    <property type="match status" value="1"/>
</dbReference>
<feature type="signal peptide" evidence="2">
    <location>
        <begin position="1"/>
        <end position="18"/>
    </location>
</feature>
<feature type="chain" id="PRO_0000297683" description="Chloride channel CLIC-like protein 1">
    <location>
        <begin position="19"/>
        <end position="539"/>
    </location>
</feature>
<feature type="topological domain" description="Lumenal" evidence="10">
    <location>
        <begin position="19"/>
        <end position="184"/>
    </location>
</feature>
<feature type="transmembrane region" description="Helical" evidence="2">
    <location>
        <begin position="185"/>
        <end position="205"/>
    </location>
</feature>
<feature type="topological domain" description="Cytoplasmic" evidence="10">
    <location>
        <begin position="206"/>
        <end position="215"/>
    </location>
</feature>
<feature type="transmembrane region" description="Helical" evidence="2">
    <location>
        <begin position="216"/>
        <end position="236"/>
    </location>
</feature>
<feature type="topological domain" description="Lumenal" evidence="10">
    <location>
        <begin position="237"/>
        <end position="329"/>
    </location>
</feature>
<feature type="transmembrane region" description="Helical" evidence="2">
    <location>
        <begin position="330"/>
        <end position="350"/>
    </location>
</feature>
<feature type="topological domain" description="Cytoplasmic" evidence="10">
    <location>
        <begin position="351"/>
        <end position="539"/>
    </location>
</feature>
<feature type="region of interest" description="Disordered" evidence="3">
    <location>
        <begin position="41"/>
        <end position="61"/>
    </location>
</feature>
<feature type="region of interest" description="Disordered" evidence="3">
    <location>
        <begin position="361"/>
        <end position="410"/>
    </location>
</feature>
<feature type="region of interest" description="Disordered" evidence="3">
    <location>
        <begin position="444"/>
        <end position="539"/>
    </location>
</feature>
<feature type="compositionally biased region" description="Basic and acidic residues" evidence="3">
    <location>
        <begin position="364"/>
        <end position="389"/>
    </location>
</feature>
<feature type="compositionally biased region" description="Polar residues" evidence="3">
    <location>
        <begin position="475"/>
        <end position="485"/>
    </location>
</feature>
<feature type="compositionally biased region" description="Low complexity" evidence="3">
    <location>
        <begin position="512"/>
        <end position="521"/>
    </location>
</feature>
<feature type="site" description="Ca(2+)-mediated inhibition of channel activity" evidence="1">
    <location>
        <position position="25"/>
    </location>
</feature>
<feature type="site" description="Ca(2+)-mediated inhibition of channel activity" evidence="1">
    <location>
        <position position="181"/>
    </location>
</feature>
<feature type="modified residue" description="Phosphoserine" evidence="12">
    <location>
        <position position="429"/>
    </location>
</feature>
<feature type="modified residue" description="Phosphoserine" evidence="1">
    <location>
        <position position="433"/>
    </location>
</feature>
<feature type="modified residue" description="Phosphoserine" evidence="1">
    <location>
        <position position="459"/>
    </location>
</feature>
<feature type="modified residue" description="Phosphothreonine" evidence="1">
    <location>
        <position position="476"/>
    </location>
</feature>
<feature type="modified residue" description="Phosphoserine" evidence="12">
    <location>
        <position position="498"/>
    </location>
</feature>
<feature type="modified residue" description="Phosphoserine" evidence="1">
    <location>
        <position position="513"/>
    </location>
</feature>
<feature type="modified residue" description="Phosphoserine" evidence="1">
    <location>
        <position position="521"/>
    </location>
</feature>
<feature type="mutagenesis site" description="Decreases protein expression and abolishes PIP2-dependent channel activity. Acts as a dominant-negative and suppresses ATP-induced Ca(2+) release from the ER. In a knockin mouse model causes enhanced ER stress response, accumulation of unfolded proteins in cerebellum and motor neuron degeneration in compound heterozygosity with a hypomorphic allele; leads to embryonic lethality with a KO allele." evidence="6">
    <original>K</original>
    <variation>A</variation>
    <location>
        <position position="298"/>
    </location>
</feature>
<feature type="mutagenesis site" description="Abolishes PIP2-dependent channel activity." evidence="6">
    <original>K</original>
    <variation>E</variation>
    <location>
        <position position="298"/>
    </location>
</feature>
<proteinExistence type="evidence at protein level"/>
<keyword id="KW-0868">Chloride</keyword>
<keyword id="KW-0869">Chloride channel</keyword>
<keyword id="KW-0256">Endoplasmic reticulum</keyword>
<keyword id="KW-0407">Ion channel</keyword>
<keyword id="KW-0406">Ion transport</keyword>
<keyword id="KW-0472">Membrane</keyword>
<keyword id="KW-0597">Phosphoprotein</keyword>
<keyword id="KW-1185">Reference proteome</keyword>
<keyword id="KW-0732">Signal</keyword>
<keyword id="KW-0812">Transmembrane</keyword>
<keyword id="KW-1133">Transmembrane helix</keyword>
<keyword id="KW-0813">Transport</keyword>
<comment type="function">
    <text evidence="4 5 6">Anion-selective channel with Ca(2+)-dependent and voltage-independent gating. Permeable to small monovalent anions with selectivity for bromide &gt; chloride &gt; nitrate &gt; fluoride (PubMed:37142673). Operates in the endoplasmic reticulum (ER) membrane where it mediates chloride efflux to compensate for the loss of positive charges from the ER lumen upon Ca(2+) release. Contributes to the maintenance of ER Ca(2+) pools and activation of unfolded protein response to prevent accumulation of misfolded proteins in the ER lumen. Particularly involved in ER homeostasis mechanisms underlying motor neurons and retinal photoreceptors survival (PubMed:25698737, PubMed:30157172, PubMed:37142673).</text>
</comment>
<comment type="catalytic activity">
    <reaction evidence="6">
        <text>chloride(in) = chloride(out)</text>
        <dbReference type="Rhea" id="RHEA:29823"/>
        <dbReference type="ChEBI" id="CHEBI:17996"/>
    </reaction>
</comment>
<comment type="catalytic activity">
    <reaction evidence="6">
        <text>bromide(in) = bromide(out)</text>
        <dbReference type="Rhea" id="RHEA:75383"/>
        <dbReference type="ChEBI" id="CHEBI:15858"/>
    </reaction>
</comment>
<comment type="catalytic activity">
    <reaction evidence="6">
        <text>nitrate(in) = nitrate(out)</text>
        <dbReference type="Rhea" id="RHEA:34923"/>
        <dbReference type="ChEBI" id="CHEBI:17632"/>
    </reaction>
</comment>
<comment type="catalytic activity">
    <reaction evidence="6">
        <text>fluoride(in) = fluoride(out)</text>
        <dbReference type="Rhea" id="RHEA:76159"/>
        <dbReference type="ChEBI" id="CHEBI:17051"/>
    </reaction>
</comment>
<comment type="activity regulation">
    <text evidence="6">Activated by membrane phosphatidylinositol 4,5-bisphosphate (PI(4,5)P2, PIP2). Inhibited by lumenal Ca(2+).</text>
</comment>
<comment type="subunit">
    <text evidence="1 6">Homomultimers (PubMed:37142673). Interacts with mitochondrial protein PIGBOS1 (via C-terminus); the interaction occurs at the mitochondria-associated endoplasmic reticulum (ER) membrane, a zone of contact between the ER and mitochondrial membranes, but does not appear to play a role in ER-mitochondria tethering and is not affected by ER stress (By similarity). Interacts with CALR (By similarity).</text>
</comment>
<comment type="subcellular location">
    <subcellularLocation>
        <location evidence="6">Endoplasmic reticulum membrane</location>
        <topology evidence="2">Multi-pass membrane protein</topology>
    </subcellularLocation>
    <text evidence="1 6">Within the endoplasmic reticulum (ER), localizes to the mitochondria-associated ER membrane, a zone of contact between the ER and mitochondrial membranes (By similarity). Enriched in the rough ER (PubMed:37142673).</text>
</comment>
<comment type="tissue specificity">
    <text evidence="6">Expressed in cerebellum (at protein level).</text>
</comment>
<comment type="disease">
    <text evidence="4">NM2453 (NM/NM) mice carrying a spontaneous hypomorphic CLCC1 allele develop progressive cerebellar granule neuron degeneration with muscle atrophy and peripheral neuropathy reminiscent of amyotrophic lateral sclerosis.</text>
</comment>
<comment type="disruption phenotype">
    <text evidence="5">Embryonic lethal.</text>
</comment>
<comment type="similarity">
    <text evidence="9">Belongs to the chloride channel MCLC family.</text>
</comment>
<comment type="sequence caution" evidence="9">
    <conflict type="erroneous gene model prediction">
        <sequence resource="EMBL-CDS" id="CAM17753"/>
    </conflict>
</comment>
<organism>
    <name type="scientific">Mus musculus</name>
    <name type="common">Mouse</name>
    <dbReference type="NCBI Taxonomy" id="10090"/>
    <lineage>
        <taxon>Eukaryota</taxon>
        <taxon>Metazoa</taxon>
        <taxon>Chordata</taxon>
        <taxon>Craniata</taxon>
        <taxon>Vertebrata</taxon>
        <taxon>Euteleostomi</taxon>
        <taxon>Mammalia</taxon>
        <taxon>Eutheria</taxon>
        <taxon>Euarchontoglires</taxon>
        <taxon>Glires</taxon>
        <taxon>Rodentia</taxon>
        <taxon>Myomorpha</taxon>
        <taxon>Muroidea</taxon>
        <taxon>Muridae</taxon>
        <taxon>Murinae</taxon>
        <taxon>Mus</taxon>
        <taxon>Mus</taxon>
    </lineage>
</organism>